<reference key="1">
    <citation type="journal article" date="1983" name="Cell">
        <title>Evolutionary history of a multigene family: an expressed human beta-tubulin gene and three processed pseudogenes.</title>
        <authorList>
            <person name="Lee M.G.-S."/>
            <person name="Lewis S.A."/>
            <person name="Wilde C.D."/>
            <person name="Cowan N.J."/>
        </authorList>
    </citation>
    <scope>NUCLEOTIDE SEQUENCE [GENOMIC DNA]</scope>
</reference>
<reference key="2">
    <citation type="journal article" date="1983" name="Mol. Cell. Biol.">
        <title>Identification of two human beta-tubulin isotypes.</title>
        <authorList>
            <person name="Hall J.L."/>
            <person name="Dudley L."/>
            <person name="Dobner P.R."/>
            <person name="Lewis S.A."/>
            <person name="Cowan N.J."/>
        </authorList>
    </citation>
    <scope>NUCLEOTIDE SEQUENCE [GENOMIC DNA]</scope>
</reference>
<reference key="3">
    <citation type="journal article" date="2001" name="Bioorg. Med. Chem.">
        <title>Tubulins in the primate retina: evidence that xanthophylls may be endogenous ligands for the paclitaxel-binding site.</title>
        <authorList>
            <person name="Crabtree D.V."/>
            <person name="Ojima I."/>
            <person name="Geng X."/>
            <person name="Adler A.J."/>
        </authorList>
    </citation>
    <scope>NUCLEOTIDE SEQUENCE [MRNA]</scope>
    <source>
        <tissue>Retina</tissue>
    </source>
</reference>
<reference key="4">
    <citation type="submission" date="1998-06" db="EMBL/GenBank/DDBJ databases">
        <authorList>
            <person name="Yu W."/>
            <person name="Gibbs R.A."/>
        </authorList>
    </citation>
    <scope>NUCLEOTIDE SEQUENCE [LARGE SCALE MRNA]</scope>
    <source>
        <tissue>Brain</tissue>
    </source>
</reference>
<reference key="5">
    <citation type="submission" date="1999-09" db="EMBL/GenBank/DDBJ databases">
        <title>Homo sapiens 2,229,817bp genomic DNA of 6p21.3 HLA class I region.</title>
        <authorList>
            <person name="Shiina S."/>
            <person name="Tamiya G."/>
            <person name="Oka A."/>
            <person name="Inoko H."/>
        </authorList>
    </citation>
    <scope>NUCLEOTIDE SEQUENCE [LARGE SCALE GENOMIC DNA]</scope>
</reference>
<reference key="6">
    <citation type="submission" date="2002-07" db="EMBL/GenBank/DDBJ databases">
        <title>Genome diversity in HLA: a new strategy for detection of genetic polymorphisms in expressed genes within the HLA class III and class I regions.</title>
        <authorList>
            <person name="Shiina T."/>
            <person name="Ota M."/>
            <person name="Katsuyama Y."/>
            <person name="Hashimoto N."/>
            <person name="Inoko H."/>
        </authorList>
    </citation>
    <scope>NUCLEOTIDE SEQUENCE [LARGE SCALE GENOMIC DNA]</scope>
</reference>
<reference key="7">
    <citation type="submission" date="2001-05" db="EMBL/GenBank/DDBJ databases">
        <title>Identification of immuno-peptidmics that are recognized by tumor-reactive CTL generated from TIL of colon cancer patients.</title>
        <authorList>
            <person name="Shichijo S."/>
            <person name="Itoh K."/>
        </authorList>
    </citation>
    <scope>NUCLEOTIDE SEQUENCE [LARGE SCALE MRNA]</scope>
    <source>
        <tissue>Colon adenocarcinoma</tissue>
    </source>
</reference>
<reference key="8">
    <citation type="journal article" date="2004" name="Genome Res.">
        <title>The status, quality, and expansion of the NIH full-length cDNA project: the Mammalian Gene Collection (MGC).</title>
        <authorList>
            <consortium name="The MGC Project Team"/>
        </authorList>
    </citation>
    <scope>NUCLEOTIDE SEQUENCE [LARGE SCALE MRNA]</scope>
    <source>
        <tissue>Brain</tissue>
        <tissue>Eye</tissue>
        <tissue>Lung</tissue>
        <tissue>Muscle</tissue>
        <tissue>Placenta</tissue>
    </source>
</reference>
<reference key="9">
    <citation type="submission" date="2009-12" db="UniProtKB">
        <authorList>
            <person name="Bienvenut W.V."/>
            <person name="Campbell A."/>
            <person name="Ozanne B.W."/>
            <person name="Lourenco F."/>
            <person name="Olson M.F."/>
        </authorList>
    </citation>
    <scope>PROTEIN SEQUENCE OF 1-19; 47-77; 104-174; 242-276; 283-297; 310-359 AND 363-390</scope>
    <scope>METHYLATION AT ARG-318</scope>
    <scope>IDENTIFICATION BY MASS SPECTROMETRY</scope>
    <source>
        <tissue>Foreskin fibroblast</tissue>
        <tissue>Mammary carcinoma</tissue>
    </source>
</reference>
<reference key="10">
    <citation type="submission" date="2008-12" db="UniProtKB">
        <authorList>
            <person name="Lubec G."/>
            <person name="Vishwanath V."/>
            <person name="Chen W.-Q."/>
            <person name="Sun Y."/>
        </authorList>
    </citation>
    <scope>PROTEIN SEQUENCE OF 3-19; 47-58; 63-77; 104-121; 163-174; 242-251; 253-276; 283-297; 310-318; 325-336 AND 381-390</scope>
    <scope>IDENTIFICATION BY MASS SPECTROMETRY</scope>
    <source>
        <tissue>Brain</tissue>
        <tissue>Cajal-Retzius cell</tissue>
        <tissue>Fetal brain cortex</tissue>
    </source>
</reference>
<reference key="11">
    <citation type="journal article" date="2005" name="Nat. Biotechnol.">
        <title>Immunoaffinity profiling of tyrosine phosphorylation in cancer cells.</title>
        <authorList>
            <person name="Rush J."/>
            <person name="Moritz A."/>
            <person name="Lee K.A."/>
            <person name="Guo A."/>
            <person name="Goss V.L."/>
            <person name="Spek E.J."/>
            <person name="Zhang H."/>
            <person name="Zha X.-M."/>
            <person name="Polakiewicz R.D."/>
            <person name="Comb M.J."/>
        </authorList>
    </citation>
    <scope>IDENTIFICATION BY MASS SPECTROMETRY [LARGE SCALE ANALYSIS]</scope>
</reference>
<reference key="12">
    <citation type="journal article" date="2006" name="Mol. Biol. Cell">
        <title>Microtubule regulation in mitosis: tubulin phosphorylation by the cyclin-dependent kinase Cdk1.</title>
        <authorList>
            <person name="Fourest-Lieuvin A."/>
            <person name="Peris L."/>
            <person name="Gache V."/>
            <person name="Garcia-Saez I."/>
            <person name="Juillan-Binard C."/>
            <person name="Lantez V."/>
            <person name="Job D."/>
        </authorList>
    </citation>
    <scope>PHOSPHORYLATION AT SER-172</scope>
</reference>
<reference key="13">
    <citation type="journal article" date="2009" name="Cell">
        <title>Evolutionary divergence of enzymatic mechanisms for posttranslational polyglycylation.</title>
        <authorList>
            <person name="Rogowski K."/>
            <person name="Juge F."/>
            <person name="van Dijk J."/>
            <person name="Wloga D."/>
            <person name="Strub J.-M."/>
            <person name="Levilliers N."/>
            <person name="Thomas D."/>
            <person name="Bre M.-H."/>
            <person name="Van Dorsselaer A."/>
            <person name="Gaertig J."/>
            <person name="Janke C."/>
        </authorList>
    </citation>
    <scope>GLYCYLATION</scope>
</reference>
<reference key="14">
    <citation type="journal article" date="2009" name="Science">
        <title>Lysine acetylation targets protein complexes and co-regulates major cellular functions.</title>
        <authorList>
            <person name="Choudhary C."/>
            <person name="Kumar C."/>
            <person name="Gnad F."/>
            <person name="Nielsen M.L."/>
            <person name="Rehman M."/>
            <person name="Walther T.C."/>
            <person name="Olsen J.V."/>
            <person name="Mann M."/>
        </authorList>
    </citation>
    <scope>ACETYLATION [LARGE SCALE ANALYSIS] AT LYS-58</scope>
    <scope>IDENTIFICATION BY MASS SPECTROMETRY [LARGE SCALE ANALYSIS]</scope>
</reference>
<reference key="15">
    <citation type="journal article" date="2010" name="Cytoskeleton">
        <title>Tumoral and tissue-specific expression of the major human beta-tubulin isotypes.</title>
        <authorList>
            <person name="Leandro-Garcia L.J."/>
            <person name="Leskela S."/>
            <person name="Landa I."/>
            <person name="Montero-Conde C."/>
            <person name="Lopez-Jimenez E."/>
            <person name="Leton R."/>
            <person name="Cascon A."/>
            <person name="Robledo M."/>
            <person name="Rodriguez-Antona C."/>
        </authorList>
    </citation>
    <scope>TISSUE SPECIFICITY</scope>
</reference>
<reference key="16">
    <citation type="journal article" date="2010" name="Dev. Cell">
        <title>Pitchfork regulates primary cilia disassembly and left-right asymmetry.</title>
        <authorList>
            <person name="Kinzel D."/>
            <person name="Boldt K."/>
            <person name="Davis E.E."/>
            <person name="Burtscher I."/>
            <person name="Trumbach D."/>
            <person name="Diplas B."/>
            <person name="Attie-Bitach T."/>
            <person name="Wurst W."/>
            <person name="Katsanis N."/>
            <person name="Ueffing M."/>
            <person name="Lickert H."/>
        </authorList>
    </citation>
    <scope>INTERACTION WITH CIMAP3</scope>
</reference>
<reference key="17">
    <citation type="journal article" date="2011" name="BMC Syst. Biol.">
        <title>Initial characterization of the human central proteome.</title>
        <authorList>
            <person name="Burkard T.R."/>
            <person name="Planyavsky M."/>
            <person name="Kaupe I."/>
            <person name="Breitwieser F.P."/>
            <person name="Buerckstuemmer T."/>
            <person name="Bennett K.L."/>
            <person name="Superti-Furga G."/>
            <person name="Colinge J."/>
        </authorList>
    </citation>
    <scope>IDENTIFICATION BY MASS SPECTROMETRY [LARGE SCALE ANALYSIS]</scope>
</reference>
<reference key="18">
    <citation type="journal article" date="2013" name="J. Proteome Res.">
        <title>Toward a comprehensive characterization of a human cancer cell phosphoproteome.</title>
        <authorList>
            <person name="Zhou H."/>
            <person name="Di Palma S."/>
            <person name="Preisinger C."/>
            <person name="Peng M."/>
            <person name="Polat A.N."/>
            <person name="Heck A.J."/>
            <person name="Mohammed S."/>
        </authorList>
    </citation>
    <scope>PHOSPHORYLATION [LARGE SCALE ANALYSIS] AT THR-55; THR-285 AND THR-290</scope>
    <scope>IDENTIFICATION BY MASS SPECTROMETRY [LARGE SCALE ANALYSIS]</scope>
    <source>
        <tissue>Erythroleukemia</tissue>
    </source>
</reference>
<reference key="19">
    <citation type="journal article" date="2013" name="Mol. Biol. Cell">
        <title>cAMP-stimulated phosphorylation of diaphanous 1 regulates protein stability and interaction with binding partners in adrenocortical cells.</title>
        <authorList>
            <person name="Li D."/>
            <person name="Dammer E.B."/>
            <person name="Lucki N.C."/>
            <person name="Sewer M.B."/>
        </authorList>
    </citation>
    <scope>INTERACTION WITH DIAPH1</scope>
    <scope>IDENTIFICATION BY MASS SPECTROMETRY</scope>
</reference>
<reference key="20">
    <citation type="journal article" date="2014" name="J. Proteomics">
        <title>An enzyme assisted RP-RPLC approach for in-depth analysis of human liver phosphoproteome.</title>
        <authorList>
            <person name="Bian Y."/>
            <person name="Song C."/>
            <person name="Cheng K."/>
            <person name="Dong M."/>
            <person name="Wang F."/>
            <person name="Huang J."/>
            <person name="Sun D."/>
            <person name="Wang L."/>
            <person name="Ye M."/>
            <person name="Zou H."/>
        </authorList>
    </citation>
    <scope>IDENTIFICATION BY MASS SPECTROMETRY [LARGE SCALE ANALYSIS]</scope>
    <source>
        <tissue>Liver</tissue>
    </source>
</reference>
<reference key="21">
    <citation type="journal article" date="2015" name="Proteomics">
        <title>N-terminome analysis of the human mitochondrial proteome.</title>
        <authorList>
            <person name="Vaca Jacome A.S."/>
            <person name="Rabilloud T."/>
            <person name="Schaeffer-Reiss C."/>
            <person name="Rompais M."/>
            <person name="Ayoub D."/>
            <person name="Lane L."/>
            <person name="Bairoch A."/>
            <person name="Van Dorsselaer A."/>
            <person name="Carapito C."/>
        </authorList>
    </citation>
    <scope>IDENTIFICATION BY MASS SPECTROMETRY [LARGE SCALE ANALYSIS]</scope>
</reference>
<reference key="22">
    <citation type="journal article" date="2016" name="Cell">
        <title>Graded control of microtubule severing by tubulin glutamylation.</title>
        <authorList>
            <person name="Valenstein M.L."/>
            <person name="Roll-Mecak A."/>
        </authorList>
    </citation>
    <scope>GLUTAMYLATION</scope>
</reference>
<reference key="23">
    <citation type="journal article" date="2017" name="Proc. Natl. Acad. Sci. U.S.A.">
        <title>Crystal structure of tubulin tyrosine ligase-like 3 reveals essential architectural elements unique to tubulin monoglycylases.</title>
        <authorList>
            <person name="Garnham C.P."/>
            <person name="Yu I."/>
            <person name="Li Y."/>
            <person name="Roll-Mecak A."/>
        </authorList>
    </citation>
    <scope>GLUTAMYLATION AT GLU-434 AND GLU-441</scope>
    <scope>GLYCYLATION AT GLU-438; GLU-439; GLU-441; GLU-442 AND GLU-443</scope>
</reference>
<reference key="24">
    <citation type="journal article" date="2020" name="Nat. Struct. Mol. Biol.">
        <title>Structural basis for polyglutamate chain initiation and elongation by TTLL family enzymes.</title>
        <authorList>
            <person name="Mahalingan K.K."/>
            <person name="Keith Keenan E."/>
            <person name="Strickland M."/>
            <person name="Li Y."/>
            <person name="Liu Y."/>
            <person name="Ball H.L."/>
            <person name="Tanner M.E."/>
            <person name="Tjandra N."/>
            <person name="Roll-Mecak A."/>
        </authorList>
    </citation>
    <scope>GLUTAMYLATION AT GLU-438 AND GLU-439</scope>
</reference>
<reference key="25">
    <citation type="journal article" date="2020" name="Science">
        <title>TTC5 mediates autoregulation of tubulin via mRNA degradation.</title>
        <authorList>
            <person name="Lin Z."/>
            <person name="Gasic I."/>
            <person name="Chandrasekaran V."/>
            <person name="Peters N."/>
            <person name="Shao S."/>
            <person name="Mitchison T.J."/>
            <person name="Hegde R.S."/>
        </authorList>
    </citation>
    <scope>SUBUNIT</scope>
    <scope>INDUCTION</scope>
    <scope>DOMAIN</scope>
</reference>
<reference key="26">
    <citation type="journal article" date="2012" name="Cell Rep.">
        <title>Mutations in the beta-tubulin gene TUBB5 cause microcephaly with structural brain abnormalities.</title>
        <authorList>
            <person name="Breuss M."/>
            <person name="Heng J.I."/>
            <person name="Poirier K."/>
            <person name="Tian G."/>
            <person name="Jaglin X.H."/>
            <person name="Qu Z."/>
            <person name="Braun A."/>
            <person name="Gstrein T."/>
            <person name="Ngo L."/>
            <person name="Haas M."/>
            <person name="Bahi-Buisson N."/>
            <person name="Moutard M.L."/>
            <person name="Passemard S."/>
            <person name="Verloes A."/>
            <person name="Gressens P."/>
            <person name="Xie Y."/>
            <person name="Robson K.J."/>
            <person name="Rani D.S."/>
            <person name="Thangaraj K."/>
            <person name="Clausen T."/>
            <person name="Chelly J."/>
            <person name="Cowan N.J."/>
            <person name="Keays D.A."/>
        </authorList>
    </citation>
    <scope>VARIANTS CDCBM6 VAL-299; ILE-353 AND LYS-401</scope>
    <scope>CHARACTERIZATION OF VARIANTS CDCBM6 VAL-299 AND LYS-401</scope>
</reference>
<reference key="27">
    <citation type="journal article" date="2015" name="Am. J. Hum. Genet.">
        <title>Mutations in Either TUBB or MAPRE2 Cause Circumferential Skin Creases Kunze Type.</title>
        <authorList>
            <person name="Isrie M."/>
            <person name="Breuss M."/>
            <person name="Tian G."/>
            <person name="Hansen A.H."/>
            <person name="Cristofoli F."/>
            <person name="Morandell J."/>
            <person name="Kupchinsky Z.A."/>
            <person name="Sifrim A."/>
            <person name="Rodriguez-Rodriguez C.M."/>
            <person name="Dapena E.P."/>
            <person name="Doonanco K."/>
            <person name="Leonard N."/>
            <person name="Tinsa F."/>
            <person name="Moortgat S."/>
            <person name="Ulucan H."/>
            <person name="Koparir E."/>
            <person name="Karaca E."/>
            <person name="Katsanis N."/>
            <person name="Marton V."/>
            <person name="Vermeesch J.R."/>
            <person name="Davis E.E."/>
            <person name="Cowan N.J."/>
            <person name="Keays D.A."/>
            <person name="Van Esch H."/>
        </authorList>
    </citation>
    <scope>INVOLVEMENT IN CSCSC1</scope>
    <scope>VARIANTS CSCSC1 LYS-15 AND PHE-222</scope>
    <scope>CHARACTERIZATION OF VARIANTS CSCSC1 LYS-15 AND PHE-222</scope>
    <scope>SUBUNIT</scope>
    <scope>SUBCELLULAR LOCATION</scope>
</reference>
<keyword id="KW-0002">3D-structure</keyword>
<keyword id="KW-0007">Acetylation</keyword>
<keyword id="KW-0963">Cytoplasm</keyword>
<keyword id="KW-0206">Cytoskeleton</keyword>
<keyword id="KW-0903">Direct protein sequencing</keyword>
<keyword id="KW-0225">Disease variant</keyword>
<keyword id="KW-0342">GTP-binding</keyword>
<keyword id="KW-1017">Isopeptide bond</keyword>
<keyword id="KW-0460">Magnesium</keyword>
<keyword id="KW-0479">Metal-binding</keyword>
<keyword id="KW-0488">Methylation</keyword>
<keyword id="KW-0493">Microtubule</keyword>
<keyword id="KW-0547">Nucleotide-binding</keyword>
<keyword id="KW-0597">Phosphoprotein</keyword>
<keyword id="KW-1267">Proteomics identification</keyword>
<keyword id="KW-1185">Reference proteome</keyword>
<keyword id="KW-0832">Ubl conjugation</keyword>
<comment type="function">
    <text>Tubulin is the major constituent of microtubules, a cylinder consisting of laterally associated linear protofilaments composed of alpha- and beta-tubulin heterodimers. Microtubules grow by the addition of GTP-tubulin dimers to the microtubule end, where a stabilizing cap forms. Below the cap, tubulin dimers are in GDP-bound state, owing to GTPase activity of alpha-tubulin.</text>
</comment>
<comment type="cofactor">
    <cofactor evidence="1">
        <name>Mg(2+)</name>
        <dbReference type="ChEBI" id="CHEBI:18420"/>
    </cofactor>
</comment>
<comment type="subunit">
    <text evidence="2 3 8 10 11 14">Heterodimer of alpha and beta chains (PubMed:26637975). A typical microtubule is a hollow water-filled tube with an outer diameter of 25 nm and an inner diameter of 15 nM. Alpha-beta heterodimers associate head-to-tail to form protofilaments running lengthwise along the microtubule wall with the beta-tubulin subunit facing the microtubule plus end conferring a structural polarity. Microtubules usually have 13 protofilaments but different protofilament numbers can be found in some organisms and specialized cells. Interacts with CIMAP3 (PubMed:20643351). Interacts with DIAPH1 (PubMed:23325789). Interacts with MX1 (By similarity). May interact with RNABP10 (By similarity). Interacts with CFAP157 (By similarity). Nascent tubulin polypeptide interacts (via beta-tubulin MREI motif) with TTC5/STRAP; this interaction results in tubulin mRNA-targeted degradation (PubMed:31727855).</text>
</comment>
<comment type="interaction">
    <interactant intactId="EBI-350864">
        <id>P07437</id>
    </interactant>
    <interactant intactId="EBI-77613">
        <id>P05067</id>
        <label>APP</label>
    </interactant>
    <organismsDiffer>false</organismsDiffer>
    <experiments>5</experiments>
</comment>
<comment type="interaction">
    <interactant intactId="EBI-350864">
        <id>P07437</id>
    </interactant>
    <interactant intactId="EBI-1049597">
        <id>P27797</id>
        <label>CALR</label>
    </interactant>
    <organismsDiffer>false</organismsDiffer>
    <experiments>3</experiments>
</comment>
<comment type="interaction">
    <interactant intactId="EBI-350864">
        <id>P07437</id>
    </interactant>
    <interactant intactId="EBI-351007">
        <id>P36957</id>
        <label>DLST</label>
    </interactant>
    <organismsDiffer>false</organismsDiffer>
    <experiments>3</experiments>
</comment>
<comment type="interaction">
    <interactant intactId="EBI-350864">
        <id>P07437</id>
    </interactant>
    <interactant intactId="EBI-713291">
        <id>P51114</id>
        <label>FXR1</label>
    </interactant>
    <organismsDiffer>false</organismsDiffer>
    <experiments>2</experiments>
</comment>
<comment type="interaction">
    <interactant intactId="EBI-350864">
        <id>P07437</id>
    </interactant>
    <interactant intactId="EBI-466029">
        <id>P42858</id>
        <label>HTT</label>
    </interactant>
    <organismsDiffer>false</organismsDiffer>
    <experiments>9</experiments>
</comment>
<comment type="interaction">
    <interactant intactId="EBI-350864">
        <id>P07437</id>
    </interactant>
    <interactant intactId="EBI-852823">
        <id>P05412</id>
        <label>JUN</label>
    </interactant>
    <organismsDiffer>false</organismsDiffer>
    <experiments>3</experiments>
</comment>
<comment type="interaction">
    <interactant intactId="EBI-350864">
        <id>P07437</id>
    </interactant>
    <interactant intactId="EBI-5323863">
        <id>Q5S007</id>
        <label>LRRK2</label>
    </interactant>
    <organismsDiffer>false</organismsDiffer>
    <experiments>6</experiments>
</comment>
<comment type="interaction">
    <interactant intactId="EBI-350864">
        <id>P07437</id>
    </interactant>
    <interactant intactId="EBI-366233">
        <id>P10636-8</id>
        <label>MAPT</label>
    </interactant>
    <organismsDiffer>false</organismsDiffer>
    <experiments>4</experiments>
</comment>
<comment type="interaction">
    <interactant intactId="EBI-350864">
        <id>P07437</id>
    </interactant>
    <interactant intactId="EBI-713665">
        <id>P19404</id>
        <label>NDUFV2</label>
    </interactant>
    <organismsDiffer>false</organismsDiffer>
    <experiments>3</experiments>
</comment>
<comment type="interaction">
    <interactant intactId="EBI-350864">
        <id>P07437</id>
    </interactant>
    <interactant intactId="EBI-716247">
        <id>Q15843</id>
        <label>NEDD8</label>
    </interactant>
    <organismsDiffer>false</organismsDiffer>
    <experiments>4</experiments>
</comment>
<comment type="interaction">
    <interactant intactId="EBI-350864">
        <id>P07437</id>
    </interactant>
    <interactant intactId="EBI-10178578">
        <id>I6L9F6</id>
        <label>NEFL</label>
    </interactant>
    <organismsDiffer>false</organismsDiffer>
    <experiments>3</experiments>
</comment>
<comment type="interaction">
    <interactant intactId="EBI-350864">
        <id>P07437</id>
    </interactant>
    <interactant intactId="EBI-1055945">
        <id>Q8TDX7</id>
        <label>NEK7</label>
    </interactant>
    <organismsDiffer>false</organismsDiffer>
    <experiments>3</experiments>
</comment>
<comment type="interaction">
    <interactant intactId="EBI-350864">
        <id>P07437</id>
    </interactant>
    <interactant intactId="EBI-985879">
        <id>P37840</id>
        <label>SNCA</label>
    </interactant>
    <organismsDiffer>false</organismsDiffer>
    <experiments>3</experiments>
</comment>
<comment type="interaction">
    <interactant intactId="EBI-350864">
        <id>P07437</id>
    </interactant>
    <interactant intactId="EBI-990792">
        <id>P00441</id>
        <label>SOD1</label>
    </interactant>
    <organismsDiffer>false</organismsDiffer>
    <experiments>3</experiments>
</comment>
<comment type="interaction">
    <interactant intactId="EBI-350864">
        <id>P07437</id>
    </interactant>
    <interactant intactId="EBI-307104">
        <id>Q13501</id>
        <label>SQSTM1</label>
    </interactant>
    <organismsDiffer>false</organismsDiffer>
    <experiments>4</experiments>
</comment>
<comment type="interaction">
    <interactant intactId="EBI-350864">
        <id>P07437</id>
    </interactant>
    <interactant intactId="EBI-4314702">
        <id>Q03403</id>
        <label>TFF2</label>
    </interactant>
    <organismsDiffer>false</organismsDiffer>
    <experiments>3</experiments>
</comment>
<comment type="interaction">
    <interactant intactId="EBI-350864">
        <id>P07437</id>
    </interactant>
    <interactant intactId="EBI-717399">
        <id>Q9BSI4</id>
        <label>TINF2</label>
    </interactant>
    <organismsDiffer>false</organismsDiffer>
    <experiments>2</experiments>
</comment>
<comment type="interaction">
    <interactant intactId="EBI-350864">
        <id>P07437</id>
    </interactant>
    <interactant intactId="EBI-302552">
        <id>Q71U36</id>
        <label>TUBA1A</label>
    </interactant>
    <organismsDiffer>false</organismsDiffer>
    <experiments>5</experiments>
</comment>
<comment type="interaction">
    <interactant intactId="EBI-350864">
        <id>P07437</id>
    </interactant>
    <interactant intactId="EBI-1185167">
        <id>Q8AZK7</id>
        <label>EBNA-LP</label>
    </interactant>
    <organismsDiffer>true</organismsDiffer>
    <experiments>3</experiments>
</comment>
<comment type="subcellular location">
    <subcellularLocation>
        <location evidence="11">Cytoplasm</location>
        <location evidence="11">Cytoskeleton</location>
    </subcellularLocation>
</comment>
<comment type="tissue specificity">
    <text evidence="7">Ubiquitously expressed with highest levels in spleen, thymus and immature brain.</text>
</comment>
<comment type="induction">
    <text evidence="14">Autoregulated by feedback control of mRNA degradation (PubMed:31727855). In excess of soluble tubulin, nascent beta-tubulin chain binds TTC5/STRAP cofactor through the MREI motif which triggers cotranslation degradation of tubulin mRNA (PubMed:31727855).</text>
</comment>
<comment type="domain">
    <text>The highly acidic C-terminal region may bind cations such as calcium.</text>
</comment>
<comment type="domain">
    <text evidence="14">The MREI motif is common among all beta-tubulin isoforms and may be critical for tubulin autoregulation.</text>
</comment>
<comment type="PTM">
    <text evidence="3 12 13">Some glutamate residues at the C-terminus are polyglutamylated, resulting in polyglutamate chains on the gamma-carboxyl group (PubMed:26875866, PubMed:28576883). Polyglutamylation plays a key role in microtubule severing by spastin (SPAST). SPAST preferentially recognizes and acts on microtubules decorated with short polyglutamate tails: severing activity by SPAST increases as the number of glutamates per tubulin rises from one to eight, but decreases beyond this glutamylation threshold (PubMed:26875866). Glutamylation is also involved in cilia motility (By similarity).</text>
</comment>
<comment type="PTM">
    <text evidence="13 18">Some glutamate residues at the C-terminus are monoglycylated but not polyglycylated due to the absence of functional TTLL10 in human. Monoglycylation is mainly limited to tubulin incorporated into cilia and flagella axonemes, which is required for their stability and maintenance. Flagella glycylation controls sperm motility (Probable) (PubMed:28576883). Both polyglutamylation and monoglycylation can coexist on the same protein on adjacent residues, and lowering glycylation levels increases polyglutamylation, and reciprocally (Probable) (PubMed:28576883).</text>
</comment>
<comment type="PTM">
    <text evidence="6">Phosphorylated on Ser-172 by CDK1 during the cell cycle, from metaphase to telophase, but not in interphase. This phosphorylation inhibits tubulin incorporation into microtubules.</text>
</comment>
<comment type="disease" evidence="9">
    <disease id="DI-04083">
        <name>Cortical dysplasia, complex, with other brain malformations 6</name>
        <acronym>CDCBM6</acronym>
        <description>A disorder of aberrant neuronal migration and disturbed axonal guidance. Affected individuals have microcephaly, ataxia, and severe delayed psychomotor development. Brain imaging shows variable malformations of cortical development, including white matter streaks, dysmorphic basal ganglia, corpus callosum abnormalities, brainstem and cerebellar hypoplasia, cortical dysplasia, polymicrogyria.</description>
        <dbReference type="MIM" id="615771"/>
    </disease>
    <text>The disease is caused by variants affecting the gene represented in this entry.</text>
</comment>
<comment type="disease" evidence="11">
    <disease id="DI-04628">
        <name>Skin creases, congenital symmetric circumferential, 1</name>
        <acronym>CSCSC1</acronym>
        <description>An autosomal dominant disease characterized by multiple, symmetric, circumferential rings of folded skin, affecting primarily the limbs. Affected individuals also exhibit intellectual disability, cleft palate, and dysmorphic features.</description>
        <dbReference type="MIM" id="156610"/>
    </disease>
    <text>The disease is caused by variants affecting the gene represented in this entry.</text>
</comment>
<comment type="similarity">
    <text evidence="17">Belongs to the tubulin family.</text>
</comment>
<comment type="online information" name="Wikipedia">
    <link uri="https://en.wikipedia.org/wiki/Tubulin"/>
    <text>Tubulin entry</text>
</comment>
<gene>
    <name type="primary">TUBB</name>
    <name type="synonym">TUBB5</name>
    <name type="ORF">OK/SW-cl.56</name>
</gene>
<accession>P07437</accession>
<accession>P05218</accession>
<accession>Q8WUC1</accession>
<accession>Q9CY33</accession>
<protein>
    <recommendedName>
        <fullName>Tubulin beta chain</fullName>
    </recommendedName>
    <alternativeName>
        <fullName>Tubulin beta-5 chain</fullName>
    </alternativeName>
</protein>
<evidence type="ECO:0000250" key="1">
    <source>
        <dbReference type="UniProtKB" id="P68363"/>
    </source>
</evidence>
<evidence type="ECO:0000250" key="2">
    <source>
        <dbReference type="UniProtKB" id="P69893"/>
    </source>
</evidence>
<evidence type="ECO:0000250" key="3">
    <source>
        <dbReference type="UniProtKB" id="P99024"/>
    </source>
</evidence>
<evidence type="ECO:0000250" key="4">
    <source>
        <dbReference type="UniProtKB" id="Q13509"/>
    </source>
</evidence>
<evidence type="ECO:0000256" key="5">
    <source>
        <dbReference type="SAM" id="MobiDB-lite"/>
    </source>
</evidence>
<evidence type="ECO:0000269" key="6">
    <source>
    </source>
</evidence>
<evidence type="ECO:0000269" key="7">
    <source>
    </source>
</evidence>
<evidence type="ECO:0000269" key="8">
    <source>
    </source>
</evidence>
<evidence type="ECO:0000269" key="9">
    <source>
    </source>
</evidence>
<evidence type="ECO:0000269" key="10">
    <source>
    </source>
</evidence>
<evidence type="ECO:0000269" key="11">
    <source>
    </source>
</evidence>
<evidence type="ECO:0000269" key="12">
    <source>
    </source>
</evidence>
<evidence type="ECO:0000269" key="13">
    <source>
    </source>
</evidence>
<evidence type="ECO:0000269" key="14">
    <source>
    </source>
</evidence>
<evidence type="ECO:0000269" key="15">
    <source>
    </source>
</evidence>
<evidence type="ECO:0000269" key="16">
    <source ref="9"/>
</evidence>
<evidence type="ECO:0000305" key="17"/>
<evidence type="ECO:0000305" key="18">
    <source>
    </source>
</evidence>
<evidence type="ECO:0007744" key="19">
    <source>
    </source>
</evidence>
<evidence type="ECO:0007744" key="20">
    <source>
    </source>
</evidence>
<evidence type="ECO:0007829" key="21">
    <source>
        <dbReference type="PDB" id="7TTT"/>
    </source>
</evidence>
<evidence type="ECO:0007829" key="22">
    <source>
        <dbReference type="PDB" id="7X0S"/>
    </source>
</evidence>
<evidence type="ECO:0007829" key="23">
    <source>
        <dbReference type="PDB" id="8V2J"/>
    </source>
</evidence>
<evidence type="ECO:0007829" key="24">
    <source>
        <dbReference type="PDB" id="9BP6"/>
    </source>
</evidence>
<feature type="chain" id="PRO_0000048243" description="Tubulin beta chain">
    <location>
        <begin position="1"/>
        <end position="444"/>
    </location>
</feature>
<feature type="region of interest" description="Disordered" evidence="5">
    <location>
        <begin position="423"/>
        <end position="444"/>
    </location>
</feature>
<feature type="short sequence motif" description="MREI motif" evidence="14">
    <location>
        <begin position="1"/>
        <end position="4"/>
    </location>
</feature>
<feature type="compositionally biased region" description="Acidic residues" evidence="5">
    <location>
        <begin position="429"/>
        <end position="444"/>
    </location>
</feature>
<feature type="binding site" evidence="4">
    <location>
        <position position="11"/>
    </location>
    <ligand>
        <name>GTP</name>
        <dbReference type="ChEBI" id="CHEBI:37565"/>
    </ligand>
</feature>
<feature type="binding site" evidence="1">
    <location>
        <position position="69"/>
    </location>
    <ligand>
        <name>GTP</name>
        <dbReference type="ChEBI" id="CHEBI:37565"/>
    </ligand>
</feature>
<feature type="binding site" evidence="1">
    <location>
        <position position="69"/>
    </location>
    <ligand>
        <name>Mg(2+)</name>
        <dbReference type="ChEBI" id="CHEBI:18420"/>
    </ligand>
</feature>
<feature type="binding site" evidence="4">
    <location>
        <position position="138"/>
    </location>
    <ligand>
        <name>GTP</name>
        <dbReference type="ChEBI" id="CHEBI:37565"/>
    </ligand>
</feature>
<feature type="binding site" evidence="4">
    <location>
        <position position="142"/>
    </location>
    <ligand>
        <name>GTP</name>
        <dbReference type="ChEBI" id="CHEBI:37565"/>
    </ligand>
</feature>
<feature type="binding site" evidence="4">
    <location>
        <position position="143"/>
    </location>
    <ligand>
        <name>GTP</name>
        <dbReference type="ChEBI" id="CHEBI:37565"/>
    </ligand>
</feature>
<feature type="binding site" evidence="4">
    <location>
        <position position="144"/>
    </location>
    <ligand>
        <name>GTP</name>
        <dbReference type="ChEBI" id="CHEBI:37565"/>
    </ligand>
</feature>
<feature type="binding site" evidence="4">
    <location>
        <position position="204"/>
    </location>
    <ligand>
        <name>GTP</name>
        <dbReference type="ChEBI" id="CHEBI:37565"/>
    </ligand>
</feature>
<feature type="binding site" evidence="4">
    <location>
        <position position="226"/>
    </location>
    <ligand>
        <name>GTP</name>
        <dbReference type="ChEBI" id="CHEBI:37565"/>
    </ligand>
</feature>
<feature type="modified residue" description="Phosphoserine" evidence="3">
    <location>
        <position position="40"/>
    </location>
</feature>
<feature type="modified residue" description="Phosphothreonine" evidence="20">
    <location>
        <position position="55"/>
    </location>
</feature>
<feature type="modified residue" description="N6-acetyllysine; alternate" evidence="19">
    <location>
        <position position="58"/>
    </location>
</feature>
<feature type="modified residue" description="N6-succinyllysine; alternate" evidence="3">
    <location>
        <position position="58"/>
    </location>
</feature>
<feature type="modified residue" description="Phosphoserine; by CDK1" evidence="6">
    <location>
        <position position="172"/>
    </location>
</feature>
<feature type="modified residue" description="Phosphothreonine" evidence="20">
    <location>
        <position position="285"/>
    </location>
</feature>
<feature type="modified residue" description="Phosphothreonine" evidence="20">
    <location>
        <position position="290"/>
    </location>
</feature>
<feature type="modified residue" description="Omega-N-methylarginine" evidence="16">
    <location>
        <position position="318"/>
    </location>
</feature>
<feature type="modified residue" description="5-glutamyl polyglutamate" evidence="13">
    <location>
        <position position="434"/>
    </location>
</feature>
<feature type="modified residue" description="5-glutamyl glycine" evidence="13">
    <location>
        <position position="438"/>
    </location>
</feature>
<feature type="modified residue" description="5-glutamyl polyglutamate" evidence="15">
    <location>
        <position position="438"/>
    </location>
</feature>
<feature type="modified residue" description="5-glutamyl glycine" evidence="13">
    <location>
        <position position="439"/>
    </location>
</feature>
<feature type="modified residue" description="5-glutamyl polyglutamate" evidence="15">
    <location>
        <position position="439"/>
    </location>
</feature>
<feature type="modified residue" description="5-glutamyl glycine" evidence="13">
    <location>
        <position position="441"/>
    </location>
</feature>
<feature type="modified residue" description="5-glutamyl polyglutamate" evidence="13">
    <location>
        <position position="441"/>
    </location>
</feature>
<feature type="modified residue" description="5-glutamyl glycine" evidence="13">
    <location>
        <position position="442"/>
    </location>
</feature>
<feature type="modified residue" description="5-glutamyl glycine" evidence="13">
    <location>
        <position position="443"/>
    </location>
</feature>
<feature type="cross-link" description="Glycyl lysine isopeptide (Lys-Gly) (interchain with G-Cter in ubiquitin); alternate">
    <location>
        <position position="58"/>
    </location>
</feature>
<feature type="cross-link" description="Glycyl lysine isopeptide (Lys-Gly) (interchain with G-Cter in ubiquitin)">
    <location>
        <position position="324"/>
    </location>
</feature>
<feature type="sequence variant" id="VAR_076543" description="In CSCSC1; disrupts heterodimer assembly and microtubule dynamics; dbSNP:rs864321676." evidence="11">
    <original>Q</original>
    <variation>K</variation>
    <location>
        <position position="15"/>
    </location>
</feature>
<feature type="sequence variant" id="VAR_076544" description="In CSCSC1; disrupts heterodimer assembly and microtubule dynamics; dbSNP:rs864321677." evidence="11">
    <original>Y</original>
    <variation>F</variation>
    <location>
        <position position="222"/>
    </location>
</feature>
<feature type="sequence variant" id="VAR_071763" description="In CDCBM6; decreases the ability of the protein to assemble into tubulin heterodimers; dbSNP:rs587777355." evidence="9">
    <original>M</original>
    <variation>V</variation>
    <location>
        <position position="299"/>
    </location>
</feature>
<feature type="sequence variant" id="VAR_071764" description="In CDCBM6; does not affect the ability of the mutant polypeptides to assemble into heterodimers and incorporate into microtubules; dbSNP:rs587777356." evidence="9">
    <original>V</original>
    <variation>I</variation>
    <location>
        <position position="353"/>
    </location>
</feature>
<feature type="sequence variant" id="VAR_071765" description="In CDCBM6; arrests the assembly pathway of alpha/beta-tubulin; the mutant protein is unable to coassemble into a tubulin heterodimer but is instead distributed throughout the cytoplasm; dbSNP:rs587777357." evidence="9">
    <original>E</original>
    <variation>K</variation>
    <location>
        <position position="401"/>
    </location>
</feature>
<feature type="sequence conflict" description="In Ref. 1; no nucleotide entry and 2; AAB59507." evidence="17" ref="1 2">
    <original>K</original>
    <variation>R</variation>
    <location>
        <position position="216"/>
    </location>
</feature>
<feature type="sequence conflict" description="In Ref. 1; no nucleotide entry and 2; AAB59507." evidence="17" ref="1 2">
    <original>A</original>
    <variation>G</variation>
    <location>
        <position position="231"/>
    </location>
</feature>
<feature type="sequence conflict" description="In Ref. 1; no nucleotide entry and 2; AAB59507." evidence="17" ref="1 2">
    <original>SG</original>
    <variation>EC</variation>
    <location>
        <begin position="234"/>
        <end position="235"/>
    </location>
</feature>
<feature type="sequence conflict" description="In Ref. 1; no nucleotide entry and 2; AAB59507." evidence="17" ref="1 2">
    <original>E</original>
    <variation>D</variation>
    <location>
        <position position="288"/>
    </location>
</feature>
<feature type="sequence conflict" description="In Ref. 8; AAH20946." evidence="17" ref="8">
    <original>N</original>
    <variation>D</variation>
    <location>
        <position position="298"/>
    </location>
</feature>
<feature type="strand" evidence="21">
    <location>
        <begin position="3"/>
        <end position="9"/>
    </location>
</feature>
<feature type="helix" evidence="21">
    <location>
        <begin position="10"/>
        <end position="28"/>
    </location>
</feature>
<feature type="strand" evidence="23">
    <location>
        <begin position="34"/>
        <end position="36"/>
    </location>
</feature>
<feature type="helix" evidence="21">
    <location>
        <begin position="41"/>
        <end position="44"/>
    </location>
</feature>
<feature type="turn" evidence="21">
    <location>
        <begin position="48"/>
        <end position="50"/>
    </location>
</feature>
<feature type="strand" evidence="21">
    <location>
        <begin position="51"/>
        <end position="53"/>
    </location>
</feature>
<feature type="helix" evidence="23">
    <location>
        <begin position="55"/>
        <end position="57"/>
    </location>
</feature>
<feature type="strand" evidence="21">
    <location>
        <begin position="59"/>
        <end position="61"/>
    </location>
</feature>
<feature type="strand" evidence="21">
    <location>
        <begin position="63"/>
        <end position="66"/>
    </location>
</feature>
<feature type="helix" evidence="21">
    <location>
        <begin position="71"/>
        <end position="78"/>
    </location>
</feature>
<feature type="strand" evidence="21">
    <location>
        <begin position="83"/>
        <end position="85"/>
    </location>
</feature>
<feature type="helix" evidence="21">
    <location>
        <begin position="87"/>
        <end position="89"/>
    </location>
</feature>
<feature type="strand" evidence="23">
    <location>
        <begin position="90"/>
        <end position="92"/>
    </location>
</feature>
<feature type="helix" evidence="21">
    <location>
        <begin position="101"/>
        <end position="105"/>
    </location>
</feature>
<feature type="turn" evidence="21">
    <location>
        <begin position="110"/>
        <end position="112"/>
    </location>
</feature>
<feature type="helix" evidence="21">
    <location>
        <begin position="113"/>
        <end position="125"/>
    </location>
</feature>
<feature type="strand" evidence="21">
    <location>
        <begin position="127"/>
        <end position="142"/>
    </location>
</feature>
<feature type="turn" evidence="21">
    <location>
        <begin position="143"/>
        <end position="145"/>
    </location>
</feature>
<feature type="helix" evidence="21">
    <location>
        <begin position="146"/>
        <end position="158"/>
    </location>
</feature>
<feature type="strand" evidence="23">
    <location>
        <begin position="160"/>
        <end position="162"/>
    </location>
</feature>
<feature type="strand" evidence="21">
    <location>
        <begin position="163"/>
        <end position="170"/>
    </location>
</feature>
<feature type="strand" evidence="24">
    <location>
        <begin position="173"/>
        <end position="175"/>
    </location>
</feature>
<feature type="helix" evidence="21">
    <location>
        <begin position="181"/>
        <end position="193"/>
    </location>
</feature>
<feature type="strand" evidence="21">
    <location>
        <begin position="197"/>
        <end position="200"/>
    </location>
</feature>
<feature type="helix" evidence="21">
    <location>
        <begin position="204"/>
        <end position="211"/>
    </location>
</feature>
<feature type="turn" evidence="21">
    <location>
        <begin position="212"/>
        <end position="214"/>
    </location>
</feature>
<feature type="helix" evidence="21">
    <location>
        <begin position="222"/>
        <end position="241"/>
    </location>
</feature>
<feature type="helix" evidence="21">
    <location>
        <begin position="250"/>
        <end position="257"/>
    </location>
</feature>
<feature type="strand" evidence="22">
    <location>
        <begin position="259"/>
        <end position="262"/>
    </location>
</feature>
<feature type="strand" evidence="21">
    <location>
        <begin position="265"/>
        <end position="269"/>
    </location>
</feature>
<feature type="helix" evidence="23">
    <location>
        <begin position="278"/>
        <end position="281"/>
    </location>
</feature>
<feature type="helix" evidence="23">
    <location>
        <begin position="286"/>
        <end position="294"/>
    </location>
</feature>
<feature type="helix" evidence="23">
    <location>
        <begin position="296"/>
        <end position="298"/>
    </location>
</feature>
<feature type="strand" evidence="23">
    <location>
        <begin position="300"/>
        <end position="303"/>
    </location>
</feature>
<feature type="helix" evidence="23">
    <location>
        <begin position="305"/>
        <end position="307"/>
    </location>
</feature>
<feature type="strand" evidence="23">
    <location>
        <begin position="310"/>
        <end position="319"/>
    </location>
</feature>
<feature type="helix" evidence="23">
    <location>
        <begin position="323"/>
        <end position="336"/>
    </location>
</feature>
<feature type="helix" evidence="23">
    <location>
        <begin position="338"/>
        <end position="340"/>
    </location>
</feature>
<feature type="strand" evidence="23">
    <location>
        <begin position="349"/>
        <end position="356"/>
    </location>
</feature>
<feature type="strand" evidence="21">
    <location>
        <begin position="367"/>
        <end position="369"/>
    </location>
</feature>
<feature type="helix" evidence="21">
    <location>
        <begin position="374"/>
        <end position="389"/>
    </location>
</feature>
<feature type="turn" evidence="21">
    <location>
        <begin position="390"/>
        <end position="395"/>
    </location>
</feature>
<feature type="helix" evidence="21">
    <location>
        <begin position="396"/>
        <end position="399"/>
    </location>
</feature>
<feature type="turn" evidence="21">
    <location>
        <begin position="400"/>
        <end position="402"/>
    </location>
</feature>
<feature type="helix" evidence="21">
    <location>
        <begin position="405"/>
        <end position="423"/>
    </location>
</feature>
<feature type="turn" evidence="21">
    <location>
        <begin position="424"/>
        <end position="426"/>
    </location>
</feature>
<feature type="helix" evidence="21">
    <location>
        <begin position="429"/>
        <end position="431"/>
    </location>
</feature>
<organism>
    <name type="scientific">Homo sapiens</name>
    <name type="common">Human</name>
    <dbReference type="NCBI Taxonomy" id="9606"/>
    <lineage>
        <taxon>Eukaryota</taxon>
        <taxon>Metazoa</taxon>
        <taxon>Chordata</taxon>
        <taxon>Craniata</taxon>
        <taxon>Vertebrata</taxon>
        <taxon>Euteleostomi</taxon>
        <taxon>Mammalia</taxon>
        <taxon>Eutheria</taxon>
        <taxon>Euarchontoglires</taxon>
        <taxon>Primates</taxon>
        <taxon>Haplorrhini</taxon>
        <taxon>Catarrhini</taxon>
        <taxon>Hominidae</taxon>
        <taxon>Homo</taxon>
    </lineage>
</organism>
<name>TBB5_HUMAN</name>
<sequence>MREIVHIQAGQCGNQIGAKFWEVISDEHGIDPTGTYHGDSDLQLDRISVYYNEATGGKYVPRAILVDLEPGTMDSVRSGPFGQIFRPDNFVFGQSGAGNNWAKGHYTEGAELVDSVLDVVRKEAESCDCLQGFQLTHSLGGGTGSGMGTLLISKIREEYPDRIMNTFSVVPSPKVSDTVVEPYNATLSVHQLVENTDETYCIDNEALYDICFRTLKLTTPTYGDLNHLVSATMSGVTTCLRFPGQLNADLRKLAVNMVPFPRLHFFMPGFAPLTSRGSQQYRALTVPELTQQVFDAKNMMAACDPRHGRYLTVAAVFRGRMSMKEVDEQMLNVQNKNSSYFVEWIPNNVKTAVCDIPPRGLKMAVTFIGNSTAIQELFKRISEQFTAMFRRKAFLHWYTGEGMDEMEFTEAESNMNDLVSEYQQYQDATAEEEEDFGEEAEEEA</sequence>
<dbReference type="EMBL" id="J00314">
    <property type="protein sequence ID" value="AAB59507.1"/>
    <property type="molecule type" value="Genomic_DNA"/>
</dbReference>
<dbReference type="EMBL" id="AF141349">
    <property type="protein sequence ID" value="AAD33873.1"/>
    <property type="molecule type" value="mRNA"/>
</dbReference>
<dbReference type="EMBL" id="AF070561">
    <property type="protein sequence ID" value="AAC28642.1"/>
    <property type="molecule type" value="mRNA"/>
</dbReference>
<dbReference type="EMBL" id="AF070593">
    <property type="protein sequence ID" value="AAC28650.1"/>
    <property type="molecule type" value="mRNA"/>
</dbReference>
<dbReference type="EMBL" id="AF070600">
    <property type="protein sequence ID" value="AAC28654.1"/>
    <property type="molecule type" value="mRNA"/>
</dbReference>
<dbReference type="EMBL" id="BA000025">
    <property type="protein sequence ID" value="BAB63321.1"/>
    <property type="molecule type" value="Genomic_DNA"/>
</dbReference>
<dbReference type="EMBL" id="AB088100">
    <property type="protein sequence ID" value="BAC54932.1"/>
    <property type="molecule type" value="Genomic_DNA"/>
</dbReference>
<dbReference type="EMBL" id="AB062393">
    <property type="protein sequence ID" value="BAB93480.1"/>
    <property type="molecule type" value="mRNA"/>
</dbReference>
<dbReference type="EMBL" id="BC001938">
    <property type="protein sequence ID" value="AAH01938.1"/>
    <property type="molecule type" value="mRNA"/>
</dbReference>
<dbReference type="EMBL" id="BC002347">
    <property type="protein sequence ID" value="AAH02347.1"/>
    <property type="molecule type" value="mRNA"/>
</dbReference>
<dbReference type="EMBL" id="BC005838">
    <property type="protein sequence ID" value="AAH05838.1"/>
    <property type="molecule type" value="mRNA"/>
</dbReference>
<dbReference type="EMBL" id="BC007605">
    <property type="protein sequence ID" value="AAH07605.1"/>
    <property type="molecule type" value="mRNA"/>
</dbReference>
<dbReference type="EMBL" id="BC013374">
    <property type="protein sequence ID" value="AAH13374.1"/>
    <property type="molecule type" value="mRNA"/>
</dbReference>
<dbReference type="EMBL" id="BC019924">
    <property type="protein sequence ID" value="AAH19924.1"/>
    <property type="molecule type" value="mRNA"/>
</dbReference>
<dbReference type="EMBL" id="BC020946">
    <property type="protein sequence ID" value="AAH20946.1"/>
    <property type="molecule type" value="mRNA"/>
</dbReference>
<dbReference type="EMBL" id="BC021909">
    <property type="protein sequence ID" value="AAH21909.1"/>
    <property type="molecule type" value="mRNA"/>
</dbReference>
<dbReference type="EMBL" id="BC070326">
    <property type="protein sequence ID" value="AAH70326.1"/>
    <property type="molecule type" value="mRNA"/>
</dbReference>
<dbReference type="CCDS" id="CCDS4687.1"/>
<dbReference type="PIR" id="A26561">
    <property type="entry name" value="A26561"/>
</dbReference>
<dbReference type="RefSeq" id="NP_001280141.1">
    <property type="nucleotide sequence ID" value="NM_001293212.1"/>
</dbReference>
<dbReference type="RefSeq" id="NP_001280142.1">
    <property type="nucleotide sequence ID" value="NM_001293213.1"/>
</dbReference>
<dbReference type="RefSeq" id="NP_001280143.1">
    <property type="nucleotide sequence ID" value="NM_001293214.1"/>
</dbReference>
<dbReference type="RefSeq" id="NP_001280144.1">
    <property type="nucleotide sequence ID" value="NM_001293215.1"/>
</dbReference>
<dbReference type="RefSeq" id="NP_001280145.1">
    <property type="nucleotide sequence ID" value="NM_001293216.1"/>
</dbReference>
<dbReference type="RefSeq" id="NP_821133.1">
    <property type="nucleotide sequence ID" value="NM_178014.4"/>
</dbReference>
<dbReference type="PDB" id="3QNZ">
    <property type="method" value="X-ray"/>
    <property type="resolution" value="2.20 A"/>
    <property type="chains" value="C=429-438"/>
</dbReference>
<dbReference type="PDB" id="3QO0">
    <property type="method" value="X-ray"/>
    <property type="resolution" value="2.30 A"/>
    <property type="chains" value="C=422-441"/>
</dbReference>
<dbReference type="PDB" id="5N5N">
    <property type="method" value="EM"/>
    <property type="resolution" value="4.00 A"/>
    <property type="chains" value="A/B/C/D/E/F=1-426"/>
</dbReference>
<dbReference type="PDB" id="6I2I">
    <property type="method" value="EM"/>
    <property type="resolution" value="3.60 A"/>
    <property type="chains" value="B=1-444"/>
</dbReference>
<dbReference type="PDB" id="6QUS">
    <property type="method" value="EM"/>
    <property type="resolution" value="3.70 A"/>
    <property type="chains" value="S/U=1-444"/>
</dbReference>
<dbReference type="PDB" id="6QUY">
    <property type="method" value="EM"/>
    <property type="resolution" value="3.80 A"/>
    <property type="chains" value="G/H=1-444"/>
</dbReference>
<dbReference type="PDB" id="6QVE">
    <property type="method" value="EM"/>
    <property type="resolution" value="3.70 A"/>
    <property type="chains" value="G/H=1-444"/>
</dbReference>
<dbReference type="PDB" id="6QVJ">
    <property type="method" value="EM"/>
    <property type="resolution" value="3.80 A"/>
    <property type="chains" value="S/U=1-444"/>
</dbReference>
<dbReference type="PDB" id="7TRG">
    <property type="method" value="EM"/>
    <property type="resolution" value="3.00 A"/>
    <property type="chains" value="A=1-444"/>
</dbReference>
<dbReference type="PDB" id="7TTN">
    <property type="method" value="EM"/>
    <property type="resolution" value="3.30 A"/>
    <property type="chains" value="A=1-444"/>
</dbReference>
<dbReference type="PDB" id="7TTT">
    <property type="method" value="EM"/>
    <property type="resolution" value="2.90 A"/>
    <property type="chains" value="A=1-444"/>
</dbReference>
<dbReference type="PDB" id="7TUB">
    <property type="method" value="EM"/>
    <property type="resolution" value="3.60 A"/>
    <property type="chains" value="A=1-444"/>
</dbReference>
<dbReference type="PDB" id="7X0S">
    <property type="method" value="EM"/>
    <property type="resolution" value="3.10 A"/>
    <property type="chains" value="R=1-444"/>
</dbReference>
<dbReference type="PDB" id="8BPO">
    <property type="method" value="EM"/>
    <property type="resolution" value="2.80 A"/>
    <property type="chains" value="u2=1-60"/>
</dbReference>
<dbReference type="PDB" id="8T42">
    <property type="method" value="EM"/>
    <property type="resolution" value="3.60 A"/>
    <property type="chains" value="B/E=1-444"/>
</dbReference>
<dbReference type="PDB" id="8U3Z">
    <property type="method" value="EM"/>
    <property type="resolution" value="3.60 A"/>
    <property type="chains" value="B/E=1-444"/>
</dbReference>
<dbReference type="PDB" id="8V2J">
    <property type="method" value="EM"/>
    <property type="resolution" value="2.90 A"/>
    <property type="chains" value="B/E=1-444"/>
</dbReference>
<dbReference type="PDB" id="9BP6">
    <property type="method" value="EM"/>
    <property type="resolution" value="3.10 A"/>
    <property type="chains" value="B/Q=1-444"/>
</dbReference>
<dbReference type="PDBsum" id="3QNZ"/>
<dbReference type="PDBsum" id="3QO0"/>
<dbReference type="PDBsum" id="5N5N"/>
<dbReference type="PDBsum" id="6I2I"/>
<dbReference type="PDBsum" id="6QUS"/>
<dbReference type="PDBsum" id="6QUY"/>
<dbReference type="PDBsum" id="6QVE"/>
<dbReference type="PDBsum" id="6QVJ"/>
<dbReference type="PDBsum" id="7TRG"/>
<dbReference type="PDBsum" id="7TTN"/>
<dbReference type="PDBsum" id="7TTT"/>
<dbReference type="PDBsum" id="7TUB"/>
<dbReference type="PDBsum" id="7X0S"/>
<dbReference type="PDBsum" id="8BPO"/>
<dbReference type="PDBsum" id="8T42"/>
<dbReference type="PDBsum" id="8U3Z"/>
<dbReference type="PDBsum" id="8V2J"/>
<dbReference type="PDBsum" id="9BP6"/>
<dbReference type="EMDB" id="EMD-0331"/>
<dbReference type="EMDB" id="EMD-16155"/>
<dbReference type="EMDB" id="EMD-26089"/>
<dbReference type="EMDB" id="EMD-26120"/>
<dbReference type="EMDB" id="EMD-26123"/>
<dbReference type="EMDB" id="EMD-26131"/>
<dbReference type="EMDB" id="EMD-32033"/>
<dbReference type="EMDB" id="EMD-32923"/>
<dbReference type="EMDB" id="EMD-3589"/>
<dbReference type="EMDB" id="EMD-41018"/>
<dbReference type="EMDB" id="EMD-42884"/>
<dbReference type="EMDB" id="EMD-42916"/>
<dbReference type="EMDB" id="EMD-44762"/>
<dbReference type="EMDB" id="EMD-4643"/>
<dbReference type="EMDB" id="EMD-4644"/>
<dbReference type="EMDB" id="EMD-4654"/>
<dbReference type="SMR" id="P07437"/>
<dbReference type="BioGRID" id="128444">
    <property type="interactions" value="859"/>
</dbReference>
<dbReference type="CORUM" id="P07437"/>
<dbReference type="DIP" id="DIP-32772N"/>
<dbReference type="FunCoup" id="P07437">
    <property type="interactions" value="2281"/>
</dbReference>
<dbReference type="IntAct" id="P07437">
    <property type="interactions" value="353"/>
</dbReference>
<dbReference type="MINT" id="P07437"/>
<dbReference type="STRING" id="9606.ENSP00000339001"/>
<dbReference type="BindingDB" id="P07437"/>
<dbReference type="ChEMBL" id="CHEMBL5444"/>
<dbReference type="DrugBank" id="DB11638">
    <property type="generic name" value="Artenimol"/>
</dbReference>
<dbReference type="DrugBank" id="DB05284">
    <property type="generic name" value="CA4P"/>
</dbReference>
<dbReference type="DrugBank" id="DB15534">
    <property type="generic name" value="Colchiceine"/>
</dbReference>
<dbReference type="DrugBank" id="DB01394">
    <property type="generic name" value="Colchicine"/>
</dbReference>
<dbReference type="DrugBank" id="DB09130">
    <property type="generic name" value="Copper"/>
</dbReference>
<dbReference type="DrugBank" id="DB05147">
    <property type="generic name" value="CYT997"/>
</dbReference>
<dbReference type="DrugBank" id="DB11731">
    <property type="generic name" value="Depatuxizumab mafodotin"/>
</dbReference>
<dbReference type="DrugBank" id="DB01873">
    <property type="generic name" value="Epothilone D"/>
</dbReference>
<dbReference type="DrugBank" id="DB12334">
    <property type="generic name" value="Milataxel"/>
</dbReference>
<dbReference type="DrugBank" id="DB03010">
    <property type="generic name" value="Patupilone"/>
</dbReference>
<dbReference type="DrugBank" id="DB01179">
    <property type="generic name" value="Podofilox"/>
</dbReference>
<dbReference type="DrugBank" id="DB06137">
    <property type="generic name" value="Tirbanibulin"/>
</dbReference>
<dbReference type="DrugBank" id="DB00570">
    <property type="generic name" value="Vinblastine"/>
</dbReference>
<dbReference type="DrugBank" id="DB00541">
    <property type="generic name" value="Vincristine"/>
</dbReference>
<dbReference type="DrugBank" id="DB11641">
    <property type="generic name" value="Vinflunine"/>
</dbReference>
<dbReference type="DrugBank" id="DB00361">
    <property type="generic name" value="Vinorelbine"/>
</dbReference>
<dbReference type="DrugBank" id="DB06042">
    <property type="generic name" value="ZEN-012"/>
</dbReference>
<dbReference type="DrugCentral" id="P07437"/>
<dbReference type="GuidetoPHARMACOLOGY" id="2640"/>
<dbReference type="GlyGen" id="P07437">
    <property type="glycosylation" value="11 sites, 1 O-linked glycan (11 sites)"/>
</dbReference>
<dbReference type="iPTMnet" id="P07437"/>
<dbReference type="MetOSite" id="P07437"/>
<dbReference type="PhosphoSitePlus" id="P07437"/>
<dbReference type="SwissPalm" id="P07437"/>
<dbReference type="BioMuta" id="TUBB"/>
<dbReference type="DMDM" id="56757569"/>
<dbReference type="OGP" id="P07437"/>
<dbReference type="REPRODUCTION-2DPAGE" id="P07437"/>
<dbReference type="CPTAC" id="CPTAC-5856"/>
<dbReference type="CPTAC" id="CPTAC-5881"/>
<dbReference type="jPOST" id="P07437"/>
<dbReference type="MassIVE" id="P07437"/>
<dbReference type="PaxDb" id="9606-ENSP00000339001"/>
<dbReference type="PeptideAtlas" id="P07437"/>
<dbReference type="PRIDE" id="P07437"/>
<dbReference type="ProteomicsDB" id="52002"/>
<dbReference type="Pumba" id="P07437"/>
<dbReference type="TopDownProteomics" id="P07437"/>
<dbReference type="ABCD" id="P07437">
    <property type="antibodies" value="8 sequenced antibodies"/>
</dbReference>
<dbReference type="Antibodypedia" id="48344">
    <property type="antibodies" value="1035 antibodies from 45 providers"/>
</dbReference>
<dbReference type="CPTC" id="P07437">
    <property type="antibodies" value="1 antibody"/>
</dbReference>
<dbReference type="DNASU" id="203068"/>
<dbReference type="Ensembl" id="ENST00000327892.13">
    <property type="protein sequence ID" value="ENSP00000339001.7"/>
    <property type="gene ID" value="ENSG00000196230.14"/>
</dbReference>
<dbReference type="Ensembl" id="ENST00000383564.8">
    <property type="protein sequence ID" value="ENSP00000373058.4"/>
    <property type="gene ID" value="ENSG00000183311.16"/>
</dbReference>
<dbReference type="Ensembl" id="ENST00000419792.6">
    <property type="protein sequence ID" value="ENSP00000401317.2"/>
    <property type="gene ID" value="ENSG00000235067.10"/>
</dbReference>
<dbReference type="Ensembl" id="ENST00000421473.6">
    <property type="protein sequence ID" value="ENSP00000399155.2"/>
    <property type="gene ID" value="ENSG00000224156.10"/>
</dbReference>
<dbReference type="Ensembl" id="ENST00000422650.6">
    <property type="protein sequence ID" value="ENSP00000400663.2"/>
    <property type="gene ID" value="ENSG00000229684.10"/>
</dbReference>
<dbReference type="Ensembl" id="ENST00000422674.6">
    <property type="protein sequence ID" value="ENSP00000406811.2"/>
    <property type="gene ID" value="ENSG00000227739.10"/>
</dbReference>
<dbReference type="Ensembl" id="ENST00000432462.6">
    <property type="protein sequence ID" value="ENSP00000410829.2"/>
    <property type="gene ID" value="ENSG00000232421.10"/>
</dbReference>
<dbReference type="Ensembl" id="ENST00000436628.6">
    <property type="protein sequence ID" value="ENSP00000410071.2"/>
    <property type="gene ID" value="ENSG00000232575.10"/>
</dbReference>
<dbReference type="GeneID" id="203068"/>
<dbReference type="KEGG" id="hsa:203068"/>
<dbReference type="MANE-Select" id="ENST00000327892.13">
    <property type="protein sequence ID" value="ENSP00000339001.7"/>
    <property type="RefSeq nucleotide sequence ID" value="NM_178014.4"/>
    <property type="RefSeq protein sequence ID" value="NP_821133.1"/>
</dbReference>
<dbReference type="AGR" id="HGNC:20778"/>
<dbReference type="CTD" id="203068"/>
<dbReference type="DisGeNET" id="203068"/>
<dbReference type="GeneCards" id="TUBB"/>
<dbReference type="GeneReviews" id="TUBB"/>
<dbReference type="HGNC" id="HGNC:20778">
    <property type="gene designation" value="TUBB"/>
</dbReference>
<dbReference type="HPA" id="ENSG00000196230">
    <property type="expression patterns" value="Low tissue specificity"/>
</dbReference>
<dbReference type="MalaCards" id="TUBB"/>
<dbReference type="MIM" id="156610">
    <property type="type" value="phenotype"/>
</dbReference>
<dbReference type="MIM" id="191130">
    <property type="type" value="gene"/>
</dbReference>
<dbReference type="MIM" id="615771">
    <property type="type" value="phenotype"/>
</dbReference>
<dbReference type="neXtProt" id="NX_P07437"/>
<dbReference type="OpenTargets" id="ENSG00000196230"/>
<dbReference type="Orphanet" id="2505">
    <property type="disease" value="Multiple benign circumferential skin creases on limbs"/>
</dbReference>
<dbReference type="PharmGKB" id="PA358"/>
<dbReference type="VEuPathDB" id="HostDB:ENSG00000196230"/>
<dbReference type="eggNOG" id="KOG1375">
    <property type="taxonomic scope" value="Eukaryota"/>
</dbReference>
<dbReference type="GeneTree" id="ENSGT00940000154370"/>
<dbReference type="HOGENOM" id="CLU_015718_1_1_1"/>
<dbReference type="InParanoid" id="P07437"/>
<dbReference type="OMA" id="MANTTKY"/>
<dbReference type="OrthoDB" id="1662883at2759"/>
<dbReference type="PAN-GO" id="P07437">
    <property type="GO annotations" value="6 GO annotations based on evolutionary models"/>
</dbReference>
<dbReference type="PhylomeDB" id="P07437"/>
<dbReference type="TreeFam" id="TF300298"/>
<dbReference type="PathwayCommons" id="P07437"/>
<dbReference type="Reactome" id="R-HSA-2565942">
    <property type="pathway name" value="Regulation of PLK1 Activity at G2/M Transition"/>
</dbReference>
<dbReference type="Reactome" id="R-HSA-380259">
    <property type="pathway name" value="Loss of Nlp from mitotic centrosomes"/>
</dbReference>
<dbReference type="Reactome" id="R-HSA-380270">
    <property type="pathway name" value="Recruitment of mitotic centrosome proteins and complexes"/>
</dbReference>
<dbReference type="Reactome" id="R-HSA-380284">
    <property type="pathway name" value="Loss of proteins required for interphase microtubule organization from the centrosome"/>
</dbReference>
<dbReference type="Reactome" id="R-HSA-380320">
    <property type="pathway name" value="Recruitment of NuMA to mitotic centrosomes"/>
</dbReference>
<dbReference type="Reactome" id="R-HSA-5620912">
    <property type="pathway name" value="Anchoring of the basal body to the plasma membrane"/>
</dbReference>
<dbReference type="Reactome" id="R-HSA-6798695">
    <property type="pathway name" value="Neutrophil degranulation"/>
</dbReference>
<dbReference type="Reactome" id="R-HSA-8854518">
    <property type="pathway name" value="AURKA Activation by TPX2"/>
</dbReference>
<dbReference type="Reactome" id="R-HSA-9679191">
    <property type="pathway name" value="Potential therapeutics for SARS"/>
</dbReference>
<dbReference type="SignaLink" id="P07437"/>
<dbReference type="SIGNOR" id="P07437"/>
<dbReference type="BioGRID-ORCS" id="203068">
    <property type="hits" value="803 hits in 1151 CRISPR screens"/>
</dbReference>
<dbReference type="CD-CODE" id="91857CE7">
    <property type="entry name" value="Nucleolus"/>
</dbReference>
<dbReference type="CD-CODE" id="B7348731">
    <property type="entry name" value="Synthetic Condensate 000301"/>
</dbReference>
<dbReference type="ChiTaRS" id="TUBB">
    <property type="organism name" value="human"/>
</dbReference>
<dbReference type="EvolutionaryTrace" id="P07437"/>
<dbReference type="GeneWiki" id="TUBB"/>
<dbReference type="GenomeRNAi" id="203068"/>
<dbReference type="Pharos" id="P07437">
    <property type="development level" value="Tclin"/>
</dbReference>
<dbReference type="PRO" id="PR:P07437"/>
<dbReference type="Proteomes" id="UP000005640">
    <property type="component" value="Chromosome 6"/>
</dbReference>
<dbReference type="RNAct" id="P07437">
    <property type="molecule type" value="protein"/>
</dbReference>
<dbReference type="Bgee" id="ENSG00000196230">
    <property type="expression patterns" value="Expressed in cortical plate and 101 other cell types or tissues"/>
</dbReference>
<dbReference type="ExpressionAtlas" id="P07437">
    <property type="expression patterns" value="baseline and differential"/>
</dbReference>
<dbReference type="GO" id="GO:0035578">
    <property type="term" value="C:azurophil granule lumen"/>
    <property type="evidence" value="ECO:0000304"/>
    <property type="project" value="Reactome"/>
</dbReference>
<dbReference type="GO" id="GO:0044297">
    <property type="term" value="C:cell body"/>
    <property type="evidence" value="ECO:0000314"/>
    <property type="project" value="DFLAT"/>
</dbReference>
<dbReference type="GO" id="GO:0005737">
    <property type="term" value="C:cytoplasm"/>
    <property type="evidence" value="ECO:0000314"/>
    <property type="project" value="CAFA"/>
</dbReference>
<dbReference type="GO" id="GO:0036464">
    <property type="term" value="C:cytoplasmic ribonucleoprotein granule"/>
    <property type="evidence" value="ECO:0000314"/>
    <property type="project" value="ParkinsonsUK-UCL"/>
</dbReference>
<dbReference type="GO" id="GO:0005856">
    <property type="term" value="C:cytoskeleton"/>
    <property type="evidence" value="ECO:0000304"/>
    <property type="project" value="UniProtKB"/>
</dbReference>
<dbReference type="GO" id="GO:0005829">
    <property type="term" value="C:cytosol"/>
    <property type="evidence" value="ECO:0000304"/>
    <property type="project" value="Reactome"/>
</dbReference>
<dbReference type="GO" id="GO:0070062">
    <property type="term" value="C:extracellular exosome"/>
    <property type="evidence" value="ECO:0007005"/>
    <property type="project" value="UniProtKB"/>
</dbReference>
<dbReference type="GO" id="GO:0005576">
    <property type="term" value="C:extracellular region"/>
    <property type="evidence" value="ECO:0000304"/>
    <property type="project" value="Reactome"/>
</dbReference>
<dbReference type="GO" id="GO:0045171">
    <property type="term" value="C:intercellular bridge"/>
    <property type="evidence" value="ECO:0000314"/>
    <property type="project" value="HPA"/>
</dbReference>
<dbReference type="GO" id="GO:0045121">
    <property type="term" value="C:membrane raft"/>
    <property type="evidence" value="ECO:0007669"/>
    <property type="project" value="Ensembl"/>
</dbReference>
<dbReference type="GO" id="GO:0005874">
    <property type="term" value="C:microtubule"/>
    <property type="evidence" value="ECO:0000314"/>
    <property type="project" value="UniProtKB"/>
</dbReference>
<dbReference type="GO" id="GO:0015630">
    <property type="term" value="C:microtubule cytoskeleton"/>
    <property type="evidence" value="ECO:0000314"/>
    <property type="project" value="HPA"/>
</dbReference>
<dbReference type="GO" id="GO:0072686">
    <property type="term" value="C:mitotic spindle"/>
    <property type="evidence" value="ECO:0000314"/>
    <property type="project" value="HPA"/>
</dbReference>
<dbReference type="GO" id="GO:0005641">
    <property type="term" value="C:nuclear envelope lumen"/>
    <property type="evidence" value="ECO:0000314"/>
    <property type="project" value="DFLAT"/>
</dbReference>
<dbReference type="GO" id="GO:0005634">
    <property type="term" value="C:nucleus"/>
    <property type="evidence" value="ECO:0007005"/>
    <property type="project" value="UniProtKB"/>
</dbReference>
<dbReference type="GO" id="GO:0032991">
    <property type="term" value="C:protein-containing complex"/>
    <property type="evidence" value="ECO:0007669"/>
    <property type="project" value="Ensembl"/>
</dbReference>
<dbReference type="GO" id="GO:0005525">
    <property type="term" value="F:GTP binding"/>
    <property type="evidence" value="ECO:0000318"/>
    <property type="project" value="GO_Central"/>
</dbReference>
<dbReference type="GO" id="GO:0032794">
    <property type="term" value="F:GTPase activating protein binding"/>
    <property type="evidence" value="ECO:0007669"/>
    <property type="project" value="Ensembl"/>
</dbReference>
<dbReference type="GO" id="GO:0003924">
    <property type="term" value="F:GTPase activity"/>
    <property type="evidence" value="ECO:0007669"/>
    <property type="project" value="InterPro"/>
</dbReference>
<dbReference type="GO" id="GO:0046872">
    <property type="term" value="F:metal ion binding"/>
    <property type="evidence" value="ECO:0007669"/>
    <property type="project" value="UniProtKB-KW"/>
</dbReference>
<dbReference type="GO" id="GO:0042288">
    <property type="term" value="F:MHC class I protein binding"/>
    <property type="evidence" value="ECO:0000314"/>
    <property type="project" value="UniProtKB"/>
</dbReference>
<dbReference type="GO" id="GO:0019904">
    <property type="term" value="F:protein domain specific binding"/>
    <property type="evidence" value="ECO:0007669"/>
    <property type="project" value="Ensembl"/>
</dbReference>
<dbReference type="GO" id="GO:0044877">
    <property type="term" value="F:protein-containing complex binding"/>
    <property type="evidence" value="ECO:0007669"/>
    <property type="project" value="Ensembl"/>
</dbReference>
<dbReference type="GO" id="GO:0005200">
    <property type="term" value="F:structural constituent of cytoskeleton"/>
    <property type="evidence" value="ECO:0000318"/>
    <property type="project" value="GO_Central"/>
</dbReference>
<dbReference type="GO" id="GO:0005198">
    <property type="term" value="F:structural molecule activity"/>
    <property type="evidence" value="ECO:0000304"/>
    <property type="project" value="BHF-UCL"/>
</dbReference>
<dbReference type="GO" id="GO:0031625">
    <property type="term" value="F:ubiquitin protein ligase binding"/>
    <property type="evidence" value="ECO:0000353"/>
    <property type="project" value="ParkinsonsUK-UCL"/>
</dbReference>
<dbReference type="GO" id="GO:0051301">
    <property type="term" value="P:cell division"/>
    <property type="evidence" value="ECO:0000304"/>
    <property type="project" value="BHF-UCL"/>
</dbReference>
<dbReference type="GO" id="GO:0030705">
    <property type="term" value="P:cytoskeleton-dependent intracellular transport"/>
    <property type="evidence" value="ECO:0000304"/>
    <property type="project" value="BHF-UCL"/>
</dbReference>
<dbReference type="GO" id="GO:0000226">
    <property type="term" value="P:microtubule cytoskeleton organization"/>
    <property type="evidence" value="ECO:0000318"/>
    <property type="project" value="GO_Central"/>
</dbReference>
<dbReference type="GO" id="GO:0007017">
    <property type="term" value="P:microtubule-based process"/>
    <property type="evidence" value="ECO:0000304"/>
    <property type="project" value="BHF-UCL"/>
</dbReference>
<dbReference type="GO" id="GO:0000278">
    <property type="term" value="P:mitotic cell cycle"/>
    <property type="evidence" value="ECO:0000318"/>
    <property type="project" value="GO_Central"/>
</dbReference>
<dbReference type="GO" id="GO:0042267">
    <property type="term" value="P:natural killer cell mediated cytotoxicity"/>
    <property type="evidence" value="ECO:0000303"/>
    <property type="project" value="UniProtKB"/>
</dbReference>
<dbReference type="GO" id="GO:0071895">
    <property type="term" value="P:odontoblast differentiation"/>
    <property type="evidence" value="ECO:0000314"/>
    <property type="project" value="GO_Central"/>
</dbReference>
<dbReference type="GO" id="GO:0050807">
    <property type="term" value="P:regulation of synapse organization"/>
    <property type="evidence" value="ECO:0007669"/>
    <property type="project" value="Ensembl"/>
</dbReference>
<dbReference type="GO" id="GO:0051225">
    <property type="term" value="P:spindle assembly"/>
    <property type="evidence" value="ECO:0007669"/>
    <property type="project" value="Ensembl"/>
</dbReference>
<dbReference type="CDD" id="cd02187">
    <property type="entry name" value="beta_tubulin"/>
    <property type="match status" value="1"/>
</dbReference>
<dbReference type="FunFam" id="1.10.287.600:FF:000002">
    <property type="entry name" value="Tubulin beta chain"/>
    <property type="match status" value="1"/>
</dbReference>
<dbReference type="FunFam" id="3.30.1330.20:FF:000002">
    <property type="entry name" value="Tubulin beta chain"/>
    <property type="match status" value="1"/>
</dbReference>
<dbReference type="FunFam" id="3.40.50.1440:FF:000003">
    <property type="entry name" value="Tubulin beta chain"/>
    <property type="match status" value="1"/>
</dbReference>
<dbReference type="Gene3D" id="1.10.287.600">
    <property type="entry name" value="Helix hairpin bin"/>
    <property type="match status" value="1"/>
</dbReference>
<dbReference type="Gene3D" id="3.30.1330.20">
    <property type="entry name" value="Tubulin/FtsZ, C-terminal domain"/>
    <property type="match status" value="1"/>
</dbReference>
<dbReference type="Gene3D" id="3.40.50.1440">
    <property type="entry name" value="Tubulin/FtsZ, GTPase domain"/>
    <property type="match status" value="1"/>
</dbReference>
<dbReference type="InterPro" id="IPR013838">
    <property type="entry name" value="Beta-tubulin_BS"/>
</dbReference>
<dbReference type="InterPro" id="IPR002453">
    <property type="entry name" value="Beta_tubulin"/>
</dbReference>
<dbReference type="InterPro" id="IPR008280">
    <property type="entry name" value="Tub_FtsZ_C"/>
</dbReference>
<dbReference type="InterPro" id="IPR000217">
    <property type="entry name" value="Tubulin"/>
</dbReference>
<dbReference type="InterPro" id="IPR037103">
    <property type="entry name" value="Tubulin/FtsZ-like_C"/>
</dbReference>
<dbReference type="InterPro" id="IPR018316">
    <property type="entry name" value="Tubulin/FtsZ_2-layer-sand-dom"/>
</dbReference>
<dbReference type="InterPro" id="IPR036525">
    <property type="entry name" value="Tubulin/FtsZ_GTPase_sf"/>
</dbReference>
<dbReference type="InterPro" id="IPR023123">
    <property type="entry name" value="Tubulin_C"/>
</dbReference>
<dbReference type="InterPro" id="IPR017975">
    <property type="entry name" value="Tubulin_CS"/>
</dbReference>
<dbReference type="InterPro" id="IPR003008">
    <property type="entry name" value="Tubulin_FtsZ_GTPase"/>
</dbReference>
<dbReference type="PANTHER" id="PTHR11588">
    <property type="entry name" value="TUBULIN"/>
    <property type="match status" value="1"/>
</dbReference>
<dbReference type="Pfam" id="PF00091">
    <property type="entry name" value="Tubulin"/>
    <property type="match status" value="1"/>
</dbReference>
<dbReference type="Pfam" id="PF03953">
    <property type="entry name" value="Tubulin_C"/>
    <property type="match status" value="1"/>
</dbReference>
<dbReference type="PRINTS" id="PR01163">
    <property type="entry name" value="BETATUBULIN"/>
</dbReference>
<dbReference type="PRINTS" id="PR01161">
    <property type="entry name" value="TUBULIN"/>
</dbReference>
<dbReference type="SMART" id="SM00864">
    <property type="entry name" value="Tubulin"/>
    <property type="match status" value="1"/>
</dbReference>
<dbReference type="SMART" id="SM00865">
    <property type="entry name" value="Tubulin_C"/>
    <property type="match status" value="1"/>
</dbReference>
<dbReference type="SUPFAM" id="SSF55307">
    <property type="entry name" value="Tubulin C-terminal domain-like"/>
    <property type="match status" value="1"/>
</dbReference>
<dbReference type="SUPFAM" id="SSF52490">
    <property type="entry name" value="Tubulin nucleotide-binding domain-like"/>
    <property type="match status" value="1"/>
</dbReference>
<dbReference type="PROSITE" id="PS00227">
    <property type="entry name" value="TUBULIN"/>
    <property type="match status" value="1"/>
</dbReference>
<dbReference type="PROSITE" id="PS00228">
    <property type="entry name" value="TUBULIN_B_AUTOREG"/>
    <property type="match status" value="1"/>
</dbReference>
<proteinExistence type="evidence at protein level"/>